<reference key="1">
    <citation type="journal article" date="2006" name="Nat. Genet.">
        <title>The multidrug-resistant human pathogen Clostridium difficile has a highly mobile, mosaic genome.</title>
        <authorList>
            <person name="Sebaihia M."/>
            <person name="Wren B.W."/>
            <person name="Mullany P."/>
            <person name="Fairweather N.F."/>
            <person name="Minton N."/>
            <person name="Stabler R."/>
            <person name="Thomson N.R."/>
            <person name="Roberts A.P."/>
            <person name="Cerdeno-Tarraga A.M."/>
            <person name="Wang H."/>
            <person name="Holden M.T.G."/>
            <person name="Wright A."/>
            <person name="Churcher C."/>
            <person name="Quail M.A."/>
            <person name="Baker S."/>
            <person name="Bason N."/>
            <person name="Brooks K."/>
            <person name="Chillingworth T."/>
            <person name="Cronin A."/>
            <person name="Davis P."/>
            <person name="Dowd L."/>
            <person name="Fraser A."/>
            <person name="Feltwell T."/>
            <person name="Hance Z."/>
            <person name="Holroyd S."/>
            <person name="Jagels K."/>
            <person name="Moule S."/>
            <person name="Mungall K."/>
            <person name="Price C."/>
            <person name="Rabbinowitsch E."/>
            <person name="Sharp S."/>
            <person name="Simmonds M."/>
            <person name="Stevens K."/>
            <person name="Unwin L."/>
            <person name="Whithead S."/>
            <person name="Dupuy B."/>
            <person name="Dougan G."/>
            <person name="Barrell B."/>
            <person name="Parkhill J."/>
        </authorList>
    </citation>
    <scope>NUCLEOTIDE SEQUENCE [LARGE SCALE GENOMIC DNA]</scope>
    <source>
        <strain>630</strain>
    </source>
</reference>
<protein>
    <recommendedName>
        <fullName evidence="1">Flagellar assembly factor FliW</fullName>
    </recommendedName>
</protein>
<evidence type="ECO:0000255" key="1">
    <source>
        <dbReference type="HAMAP-Rule" id="MF_01185"/>
    </source>
</evidence>
<proteinExistence type="inferred from homology"/>
<keyword id="KW-1005">Bacterial flagellum biogenesis</keyword>
<keyword id="KW-0143">Chaperone</keyword>
<keyword id="KW-0963">Cytoplasm</keyword>
<keyword id="KW-1185">Reference proteome</keyword>
<keyword id="KW-0810">Translation regulation</keyword>
<organism>
    <name type="scientific">Clostridioides difficile (strain 630)</name>
    <name type="common">Peptoclostridium difficile</name>
    <dbReference type="NCBI Taxonomy" id="272563"/>
    <lineage>
        <taxon>Bacteria</taxon>
        <taxon>Bacillati</taxon>
        <taxon>Bacillota</taxon>
        <taxon>Clostridia</taxon>
        <taxon>Peptostreptococcales</taxon>
        <taxon>Peptostreptococcaceae</taxon>
        <taxon>Clostridioides</taxon>
    </lineage>
</organism>
<sequence length="130" mass="14891">MMKITLKKGILGFENLKEYELLDIENEDILKEFNSTEEDCIGFIVVSPFEIIKEYEIVLNQETIEKLEVKSPNDIMLLNIITVGQTLEESTVNMKAPIVINVRNNCGMQIILQDEEYSIWHPLLRGDGGC</sequence>
<feature type="chain" id="PRO_0000272980" description="Flagellar assembly factor FliW">
    <location>
        <begin position="1"/>
        <end position="130"/>
    </location>
</feature>
<accession>Q18CX4</accession>
<comment type="function">
    <text evidence="1">Acts as an anti-CsrA protein, binds CsrA and prevents it from repressing translation of its target genes, one of which is flagellin. Binds to flagellin and participates in the assembly of the flagellum.</text>
</comment>
<comment type="subunit">
    <text evidence="1">Interacts with translational regulator CsrA and flagellin(s).</text>
</comment>
<comment type="subcellular location">
    <subcellularLocation>
        <location evidence="1">Cytoplasm</location>
    </subcellularLocation>
</comment>
<comment type="similarity">
    <text evidence="1">Belongs to the FliW family.</text>
</comment>
<name>FLIW_CLOD6</name>
<dbReference type="EMBL" id="AM180355">
    <property type="protein sequence ID" value="CAJ67054.1"/>
    <property type="molecule type" value="Genomic_DNA"/>
</dbReference>
<dbReference type="RefSeq" id="WP_011860685.1">
    <property type="nucleotide sequence ID" value="NZ_JAUPES010000004.1"/>
</dbReference>
<dbReference type="RefSeq" id="YP_001086701.1">
    <property type="nucleotide sequence ID" value="NC_009089.1"/>
</dbReference>
<dbReference type="SMR" id="Q18CX4"/>
<dbReference type="STRING" id="272563.CD630_02330"/>
<dbReference type="EnsemblBacteria" id="CAJ67054">
    <property type="protein sequence ID" value="CAJ67054"/>
    <property type="gene ID" value="CD630_02330"/>
</dbReference>
<dbReference type="KEGG" id="cdf:CD630_02330"/>
<dbReference type="KEGG" id="pdc:CDIF630_00355"/>
<dbReference type="PATRIC" id="fig|272563.120.peg.249"/>
<dbReference type="eggNOG" id="COG1699">
    <property type="taxonomic scope" value="Bacteria"/>
</dbReference>
<dbReference type="OrthoDB" id="9801235at2"/>
<dbReference type="PhylomeDB" id="Q18CX4"/>
<dbReference type="BioCyc" id="PDIF272563:G12WB-336-MONOMER"/>
<dbReference type="PHI-base" id="PHI:11774"/>
<dbReference type="Proteomes" id="UP000001978">
    <property type="component" value="Chromosome"/>
</dbReference>
<dbReference type="GO" id="GO:0005737">
    <property type="term" value="C:cytoplasm"/>
    <property type="evidence" value="ECO:0007669"/>
    <property type="project" value="UniProtKB-SubCell"/>
</dbReference>
<dbReference type="GO" id="GO:0044780">
    <property type="term" value="P:bacterial-type flagellum assembly"/>
    <property type="evidence" value="ECO:0007669"/>
    <property type="project" value="UniProtKB-UniRule"/>
</dbReference>
<dbReference type="GO" id="GO:0006417">
    <property type="term" value="P:regulation of translation"/>
    <property type="evidence" value="ECO:0007669"/>
    <property type="project" value="UniProtKB-KW"/>
</dbReference>
<dbReference type="Gene3D" id="2.30.290.10">
    <property type="entry name" value="BH3618-like"/>
    <property type="match status" value="1"/>
</dbReference>
<dbReference type="HAMAP" id="MF_01185">
    <property type="entry name" value="FliW"/>
    <property type="match status" value="1"/>
</dbReference>
<dbReference type="InterPro" id="IPR003775">
    <property type="entry name" value="Flagellar_assembly_factor_FliW"/>
</dbReference>
<dbReference type="InterPro" id="IPR024046">
    <property type="entry name" value="Flagellar_assmbl_FliW_dom_sf"/>
</dbReference>
<dbReference type="NCBIfam" id="NF009793">
    <property type="entry name" value="PRK13285.1-1"/>
    <property type="match status" value="1"/>
</dbReference>
<dbReference type="PANTHER" id="PTHR39190">
    <property type="entry name" value="FLAGELLAR ASSEMBLY FACTOR FLIW"/>
    <property type="match status" value="1"/>
</dbReference>
<dbReference type="PANTHER" id="PTHR39190:SF1">
    <property type="entry name" value="FLAGELLAR ASSEMBLY FACTOR FLIW"/>
    <property type="match status" value="1"/>
</dbReference>
<dbReference type="Pfam" id="PF02623">
    <property type="entry name" value="FliW"/>
    <property type="match status" value="1"/>
</dbReference>
<dbReference type="SUPFAM" id="SSF141457">
    <property type="entry name" value="BH3618-like"/>
    <property type="match status" value="1"/>
</dbReference>
<gene>
    <name evidence="1" type="primary">fliW</name>
    <name type="ordered locus">CD630_02330</name>
</gene>